<comment type="function">
    <text evidence="1">Catalyzes the ATP-dependent phosphorylation of N-acetyl-L-glutamate.</text>
</comment>
<comment type="catalytic activity">
    <reaction evidence="1">
        <text>N-acetyl-L-glutamate + ATP = N-acetyl-L-glutamyl 5-phosphate + ADP</text>
        <dbReference type="Rhea" id="RHEA:14629"/>
        <dbReference type="ChEBI" id="CHEBI:30616"/>
        <dbReference type="ChEBI" id="CHEBI:44337"/>
        <dbReference type="ChEBI" id="CHEBI:57936"/>
        <dbReference type="ChEBI" id="CHEBI:456216"/>
        <dbReference type="EC" id="2.7.2.8"/>
    </reaction>
</comment>
<comment type="pathway">
    <text evidence="1">Amino-acid biosynthesis; L-arginine biosynthesis; N(2)-acetyl-L-ornithine from L-glutamate: step 2/4.</text>
</comment>
<comment type="subcellular location">
    <subcellularLocation>
        <location evidence="1">Cytoplasm</location>
    </subcellularLocation>
</comment>
<comment type="similarity">
    <text evidence="1">Belongs to the acetylglutamate kinase family. ArgB subfamily.</text>
</comment>
<evidence type="ECO:0000255" key="1">
    <source>
        <dbReference type="HAMAP-Rule" id="MF_00082"/>
    </source>
</evidence>
<organism>
    <name type="scientific">Geotalea daltonii (strain DSM 22248 / JCM 15807 / FRC-32)</name>
    <name type="common">Geobacter daltonii</name>
    <dbReference type="NCBI Taxonomy" id="316067"/>
    <lineage>
        <taxon>Bacteria</taxon>
        <taxon>Pseudomonadati</taxon>
        <taxon>Thermodesulfobacteriota</taxon>
        <taxon>Desulfuromonadia</taxon>
        <taxon>Geobacterales</taxon>
        <taxon>Geobacteraceae</taxon>
        <taxon>Geotalea</taxon>
    </lineage>
</organism>
<accession>B9M371</accession>
<name>ARGB_GEODF</name>
<dbReference type="EC" id="2.7.2.8" evidence="1"/>
<dbReference type="EMBL" id="CP001390">
    <property type="protein sequence ID" value="ACM19481.1"/>
    <property type="molecule type" value="Genomic_DNA"/>
</dbReference>
<dbReference type="RefSeq" id="WP_012646210.1">
    <property type="nucleotide sequence ID" value="NC_011979.1"/>
</dbReference>
<dbReference type="SMR" id="B9M371"/>
<dbReference type="STRING" id="316067.Geob_1121"/>
<dbReference type="KEGG" id="geo:Geob_1121"/>
<dbReference type="eggNOG" id="COG0548">
    <property type="taxonomic scope" value="Bacteria"/>
</dbReference>
<dbReference type="HOGENOM" id="CLU_053680_0_0_7"/>
<dbReference type="OrthoDB" id="9803155at2"/>
<dbReference type="UniPathway" id="UPA00068">
    <property type="reaction ID" value="UER00107"/>
</dbReference>
<dbReference type="Proteomes" id="UP000007721">
    <property type="component" value="Chromosome"/>
</dbReference>
<dbReference type="GO" id="GO:0005737">
    <property type="term" value="C:cytoplasm"/>
    <property type="evidence" value="ECO:0007669"/>
    <property type="project" value="UniProtKB-SubCell"/>
</dbReference>
<dbReference type="GO" id="GO:0003991">
    <property type="term" value="F:acetylglutamate kinase activity"/>
    <property type="evidence" value="ECO:0007669"/>
    <property type="project" value="UniProtKB-UniRule"/>
</dbReference>
<dbReference type="GO" id="GO:0005524">
    <property type="term" value="F:ATP binding"/>
    <property type="evidence" value="ECO:0007669"/>
    <property type="project" value="UniProtKB-UniRule"/>
</dbReference>
<dbReference type="GO" id="GO:0042450">
    <property type="term" value="P:arginine biosynthetic process via ornithine"/>
    <property type="evidence" value="ECO:0007669"/>
    <property type="project" value="UniProtKB-UniRule"/>
</dbReference>
<dbReference type="GO" id="GO:0006526">
    <property type="term" value="P:L-arginine biosynthetic process"/>
    <property type="evidence" value="ECO:0007669"/>
    <property type="project" value="UniProtKB-UniPathway"/>
</dbReference>
<dbReference type="CDD" id="cd04250">
    <property type="entry name" value="AAK_NAGK-C"/>
    <property type="match status" value="1"/>
</dbReference>
<dbReference type="FunFam" id="3.40.1160.10:FF:000004">
    <property type="entry name" value="Acetylglutamate kinase"/>
    <property type="match status" value="1"/>
</dbReference>
<dbReference type="Gene3D" id="3.40.1160.10">
    <property type="entry name" value="Acetylglutamate kinase-like"/>
    <property type="match status" value="1"/>
</dbReference>
<dbReference type="HAMAP" id="MF_00082">
    <property type="entry name" value="ArgB"/>
    <property type="match status" value="1"/>
</dbReference>
<dbReference type="InterPro" id="IPR036393">
    <property type="entry name" value="AceGlu_kinase-like_sf"/>
</dbReference>
<dbReference type="InterPro" id="IPR004662">
    <property type="entry name" value="AcgluKinase_fam"/>
</dbReference>
<dbReference type="InterPro" id="IPR037528">
    <property type="entry name" value="ArgB"/>
</dbReference>
<dbReference type="InterPro" id="IPR001048">
    <property type="entry name" value="Asp/Glu/Uridylate_kinase"/>
</dbReference>
<dbReference type="InterPro" id="IPR001057">
    <property type="entry name" value="Glu/AcGlu_kinase"/>
</dbReference>
<dbReference type="InterPro" id="IPR041727">
    <property type="entry name" value="NAGK-C"/>
</dbReference>
<dbReference type="NCBIfam" id="TIGR00761">
    <property type="entry name" value="argB"/>
    <property type="match status" value="1"/>
</dbReference>
<dbReference type="PANTHER" id="PTHR23342">
    <property type="entry name" value="N-ACETYLGLUTAMATE SYNTHASE"/>
    <property type="match status" value="1"/>
</dbReference>
<dbReference type="PANTHER" id="PTHR23342:SF0">
    <property type="entry name" value="N-ACETYLGLUTAMATE SYNTHASE, MITOCHONDRIAL"/>
    <property type="match status" value="1"/>
</dbReference>
<dbReference type="Pfam" id="PF00696">
    <property type="entry name" value="AA_kinase"/>
    <property type="match status" value="1"/>
</dbReference>
<dbReference type="PIRSF" id="PIRSF000728">
    <property type="entry name" value="NAGK"/>
    <property type="match status" value="1"/>
</dbReference>
<dbReference type="PRINTS" id="PR00474">
    <property type="entry name" value="GLU5KINASE"/>
</dbReference>
<dbReference type="SUPFAM" id="SSF53633">
    <property type="entry name" value="Carbamate kinase-like"/>
    <property type="match status" value="1"/>
</dbReference>
<keyword id="KW-0028">Amino-acid biosynthesis</keyword>
<keyword id="KW-0055">Arginine biosynthesis</keyword>
<keyword id="KW-0067">ATP-binding</keyword>
<keyword id="KW-0963">Cytoplasm</keyword>
<keyword id="KW-0418">Kinase</keyword>
<keyword id="KW-0547">Nucleotide-binding</keyword>
<keyword id="KW-1185">Reference proteome</keyword>
<keyword id="KW-0808">Transferase</keyword>
<protein>
    <recommendedName>
        <fullName evidence="1">Acetylglutamate kinase</fullName>
        <ecNumber evidence="1">2.7.2.8</ecNumber>
    </recommendedName>
    <alternativeName>
        <fullName evidence="1">N-acetyl-L-glutamate 5-phosphotransferase</fullName>
    </alternativeName>
    <alternativeName>
        <fullName evidence="1">NAG kinase</fullName>
        <shortName evidence="1">NAGK</shortName>
    </alternativeName>
</protein>
<sequence>MQKLIEKANTLMEALPYIRRFSGKTIVIKYGGHAMADEALKKSFALDVILLKYIGINTVIVHGGGPQINETLKRYGIVSQFVKGMRVTDEATMGVVEMVLTGQVNKEVVGYLNQHGGRAVGLSGKDGGLLLCKKLLQEVKNEQGVLETVDIGFVGDVVDVDSSILVTLEAGGFIPVIAPIGVGTGGESYNINADVVAGKVAAALKAEKLILLTDVSGVKDQGGNLLSSIALGDVPGLIEDGTITGGMIPKVTCCTDALTGGVHKAHIVDGRIEHAILLEIFTNVGIGTEIQA</sequence>
<gene>
    <name evidence="1" type="primary">argB</name>
    <name type="ordered locus">Geob_1121</name>
</gene>
<feature type="chain" id="PRO_1000118351" description="Acetylglutamate kinase">
    <location>
        <begin position="1"/>
        <end position="292"/>
    </location>
</feature>
<feature type="binding site" evidence="1">
    <location>
        <begin position="64"/>
        <end position="65"/>
    </location>
    <ligand>
        <name>substrate</name>
    </ligand>
</feature>
<feature type="binding site" evidence="1">
    <location>
        <position position="86"/>
    </location>
    <ligand>
        <name>substrate</name>
    </ligand>
</feature>
<feature type="binding site" evidence="1">
    <location>
        <position position="190"/>
    </location>
    <ligand>
        <name>substrate</name>
    </ligand>
</feature>
<feature type="site" description="Transition state stabilizer" evidence="1">
    <location>
        <position position="29"/>
    </location>
</feature>
<feature type="site" description="Transition state stabilizer" evidence="1">
    <location>
        <position position="250"/>
    </location>
</feature>
<proteinExistence type="inferred from homology"/>
<reference key="1">
    <citation type="submission" date="2009-01" db="EMBL/GenBank/DDBJ databases">
        <title>Complete sequence of Geobacter sp. FRC-32.</title>
        <authorList>
            <consortium name="US DOE Joint Genome Institute"/>
            <person name="Lucas S."/>
            <person name="Copeland A."/>
            <person name="Lapidus A."/>
            <person name="Glavina del Rio T."/>
            <person name="Dalin E."/>
            <person name="Tice H."/>
            <person name="Bruce D."/>
            <person name="Goodwin L."/>
            <person name="Pitluck S."/>
            <person name="Saunders E."/>
            <person name="Brettin T."/>
            <person name="Detter J.C."/>
            <person name="Han C."/>
            <person name="Larimer F."/>
            <person name="Land M."/>
            <person name="Hauser L."/>
            <person name="Kyrpides N."/>
            <person name="Ovchinnikova G."/>
            <person name="Kostka J."/>
            <person name="Richardson P."/>
        </authorList>
    </citation>
    <scope>NUCLEOTIDE SEQUENCE [LARGE SCALE GENOMIC DNA]</scope>
    <source>
        <strain>DSM 22248 / JCM 15807 / FRC-32</strain>
    </source>
</reference>